<dbReference type="EMBL" id="Z38128">
    <property type="protein sequence ID" value="CAA86288.1"/>
    <property type="molecule type" value="Genomic_DNA"/>
</dbReference>
<dbReference type="EMBL" id="U62923">
    <property type="protein sequence ID" value="AAB05799.1"/>
    <property type="molecule type" value="Genomic_DNA"/>
</dbReference>
<dbReference type="EMBL" id="AY158906">
    <property type="protein sequence ID" value="AAO06217.1"/>
    <property type="molecule type" value="Genomic_DNA"/>
</dbReference>
<dbReference type="EMBL" id="AK054269">
    <property type="protein sequence ID" value="BAC35711.1"/>
    <property type="molecule type" value="mRNA"/>
</dbReference>
<dbReference type="CCDS" id="CCDS26346.1"/>
<dbReference type="PIR" id="B35245">
    <property type="entry name" value="B35245"/>
</dbReference>
<dbReference type="PIR" id="S49482">
    <property type="entry name" value="S49482"/>
</dbReference>
<dbReference type="RefSeq" id="NP_663759.3">
    <property type="nucleotide sequence ID" value="NM_145713.4"/>
</dbReference>
<dbReference type="SMR" id="P43277"/>
<dbReference type="BioGRID" id="200144">
    <property type="interactions" value="9"/>
</dbReference>
<dbReference type="FunCoup" id="P43277">
    <property type="interactions" value="445"/>
</dbReference>
<dbReference type="IntAct" id="P43277">
    <property type="interactions" value="6"/>
</dbReference>
<dbReference type="MINT" id="P43277"/>
<dbReference type="STRING" id="10090.ENSMUSP00000044395"/>
<dbReference type="GlyGen" id="P43277">
    <property type="glycosylation" value="1 site, 1 O-linked glycan (1 site)"/>
</dbReference>
<dbReference type="iPTMnet" id="P43277"/>
<dbReference type="PhosphoSitePlus" id="P43277"/>
<dbReference type="SwissPalm" id="P43277"/>
<dbReference type="jPOST" id="P43277"/>
<dbReference type="PaxDb" id="10090-ENSMUSP00000044395"/>
<dbReference type="PeptideAtlas" id="P43277"/>
<dbReference type="ProteomicsDB" id="271373"/>
<dbReference type="Pumba" id="P43277"/>
<dbReference type="TopDownProteomics" id="P43277"/>
<dbReference type="Antibodypedia" id="58672">
    <property type="antibodies" value="133 antibodies from 17 providers"/>
</dbReference>
<dbReference type="DNASU" id="14957"/>
<dbReference type="Ensembl" id="ENSMUST00000045301.9">
    <property type="protein sequence ID" value="ENSMUSP00000044395.7"/>
    <property type="gene ID" value="ENSMUSG00000052565.8"/>
</dbReference>
<dbReference type="GeneID" id="14957"/>
<dbReference type="KEGG" id="mmu:14957"/>
<dbReference type="UCSC" id="uc007pub.3">
    <property type="organism name" value="mouse"/>
</dbReference>
<dbReference type="AGR" id="MGI:107502"/>
<dbReference type="CTD" id="14957"/>
<dbReference type="MGI" id="MGI:107502">
    <property type="gene designation" value="H1f3"/>
</dbReference>
<dbReference type="VEuPathDB" id="HostDB:ENSMUSG00000052565"/>
<dbReference type="eggNOG" id="KOG4012">
    <property type="taxonomic scope" value="Eukaryota"/>
</dbReference>
<dbReference type="GeneTree" id="ENSGT00940000155501"/>
<dbReference type="HOGENOM" id="CLU_052897_7_0_1"/>
<dbReference type="InParanoid" id="P43277"/>
<dbReference type="OMA" id="HIQANHG"/>
<dbReference type="OrthoDB" id="9634976at2759"/>
<dbReference type="PhylomeDB" id="P43277"/>
<dbReference type="TreeFam" id="TF313664"/>
<dbReference type="BioGRID-ORCS" id="14957">
    <property type="hits" value="7 hits in 80 CRISPR screens"/>
</dbReference>
<dbReference type="CD-CODE" id="CE726F99">
    <property type="entry name" value="Postsynaptic density"/>
</dbReference>
<dbReference type="PRO" id="PR:P43277"/>
<dbReference type="Proteomes" id="UP000000589">
    <property type="component" value="Chromosome 13"/>
</dbReference>
<dbReference type="RNAct" id="P43277">
    <property type="molecule type" value="protein"/>
</dbReference>
<dbReference type="Bgee" id="ENSMUSG00000052565">
    <property type="expression patterns" value="Expressed in cerebellar layer and 89 other cell types or tissues"/>
</dbReference>
<dbReference type="ExpressionAtlas" id="P43277">
    <property type="expression patterns" value="baseline and differential"/>
</dbReference>
<dbReference type="GO" id="GO:0000791">
    <property type="term" value="C:euchromatin"/>
    <property type="evidence" value="ECO:0007669"/>
    <property type="project" value="Ensembl"/>
</dbReference>
<dbReference type="GO" id="GO:0000786">
    <property type="term" value="C:nucleosome"/>
    <property type="evidence" value="ECO:0007669"/>
    <property type="project" value="InterPro"/>
</dbReference>
<dbReference type="GO" id="GO:0005634">
    <property type="term" value="C:nucleus"/>
    <property type="evidence" value="ECO:0007669"/>
    <property type="project" value="UniProtKB-SubCell"/>
</dbReference>
<dbReference type="GO" id="GO:0031490">
    <property type="term" value="F:chromatin DNA binding"/>
    <property type="evidence" value="ECO:0007669"/>
    <property type="project" value="Ensembl"/>
</dbReference>
<dbReference type="GO" id="GO:0003677">
    <property type="term" value="F:DNA binding"/>
    <property type="evidence" value="ECO:0000314"/>
    <property type="project" value="MGI"/>
</dbReference>
<dbReference type="GO" id="GO:0030527">
    <property type="term" value="F:structural constituent of chromatin"/>
    <property type="evidence" value="ECO:0000315"/>
    <property type="project" value="MGI"/>
</dbReference>
<dbReference type="GO" id="GO:0006325">
    <property type="term" value="P:chromatin organization"/>
    <property type="evidence" value="ECO:0000315"/>
    <property type="project" value="MGI"/>
</dbReference>
<dbReference type="GO" id="GO:0000122">
    <property type="term" value="P:negative regulation of transcription by RNA polymerase II"/>
    <property type="evidence" value="ECO:0000316"/>
    <property type="project" value="MGI"/>
</dbReference>
<dbReference type="GO" id="GO:0006334">
    <property type="term" value="P:nucleosome assembly"/>
    <property type="evidence" value="ECO:0007669"/>
    <property type="project" value="InterPro"/>
</dbReference>
<dbReference type="GO" id="GO:0006357">
    <property type="term" value="P:regulation of transcription by RNA polymerase II"/>
    <property type="evidence" value="ECO:0000315"/>
    <property type="project" value="MGI"/>
</dbReference>
<dbReference type="CDD" id="cd00073">
    <property type="entry name" value="H15"/>
    <property type="match status" value="1"/>
</dbReference>
<dbReference type="FunFam" id="1.10.10.10:FF:000075">
    <property type="entry name" value="Histone H1 like"/>
    <property type="match status" value="1"/>
</dbReference>
<dbReference type="Gene3D" id="1.10.10.10">
    <property type="entry name" value="Winged helix-like DNA-binding domain superfamily/Winged helix DNA-binding domain"/>
    <property type="match status" value="1"/>
</dbReference>
<dbReference type="InterPro" id="IPR005819">
    <property type="entry name" value="H1/H5"/>
</dbReference>
<dbReference type="InterPro" id="IPR005818">
    <property type="entry name" value="Histone_H1/H5_H15"/>
</dbReference>
<dbReference type="InterPro" id="IPR036388">
    <property type="entry name" value="WH-like_DNA-bd_sf"/>
</dbReference>
<dbReference type="InterPro" id="IPR036390">
    <property type="entry name" value="WH_DNA-bd_sf"/>
</dbReference>
<dbReference type="Pfam" id="PF00538">
    <property type="entry name" value="Linker_histone"/>
    <property type="match status" value="1"/>
</dbReference>
<dbReference type="PRINTS" id="PR00624">
    <property type="entry name" value="HISTONEH5"/>
</dbReference>
<dbReference type="SMART" id="SM00526">
    <property type="entry name" value="H15"/>
    <property type="match status" value="1"/>
</dbReference>
<dbReference type="SUPFAM" id="SSF46785">
    <property type="entry name" value="Winged helix' DNA-binding domain"/>
    <property type="match status" value="1"/>
</dbReference>
<dbReference type="PROSITE" id="PS51504">
    <property type="entry name" value="H15"/>
    <property type="match status" value="1"/>
</dbReference>
<feature type="initiator methionine" description="Removed" evidence="12 13">
    <location>
        <position position="1"/>
    </location>
</feature>
<feature type="chain" id="PRO_0000195916" description="Histone H1.3">
    <location>
        <begin position="2"/>
        <end position="221"/>
    </location>
</feature>
<feature type="domain" description="H15" evidence="5">
    <location>
        <begin position="37"/>
        <end position="110"/>
    </location>
</feature>
<feature type="region of interest" description="Disordered" evidence="6">
    <location>
        <begin position="1"/>
        <end position="42"/>
    </location>
</feature>
<feature type="region of interest" description="Disordered" evidence="6">
    <location>
        <begin position="92"/>
        <end position="221"/>
    </location>
</feature>
<feature type="compositionally biased region" description="Low complexity" evidence="6">
    <location>
        <begin position="1"/>
        <end position="17"/>
    </location>
</feature>
<feature type="compositionally biased region" description="Basic residues" evidence="6">
    <location>
        <begin position="20"/>
        <end position="36"/>
    </location>
</feature>
<feature type="compositionally biased region" description="Basic residues" evidence="6">
    <location>
        <begin position="120"/>
        <end position="141"/>
    </location>
</feature>
<feature type="compositionally biased region" description="Basic residues" evidence="6">
    <location>
        <begin position="150"/>
        <end position="161"/>
    </location>
</feature>
<feature type="compositionally biased region" description="Basic residues" evidence="6">
    <location>
        <begin position="170"/>
        <end position="187"/>
    </location>
</feature>
<feature type="compositionally biased region" description="Basic residues" evidence="6">
    <location>
        <begin position="194"/>
        <end position="221"/>
    </location>
</feature>
<feature type="modified residue" description="N-acetylserine" evidence="12 13">
    <location>
        <position position="2"/>
    </location>
</feature>
<feature type="modified residue" description="Phosphoserine" evidence="3">
    <location>
        <position position="2"/>
    </location>
</feature>
<feature type="modified residue" description="N6-acetyllysine" evidence="13">
    <location>
        <position position="17"/>
    </location>
</feature>
<feature type="modified residue" description="Phosphothreonine" evidence="12">
    <location>
        <position position="18"/>
    </location>
</feature>
<feature type="modified residue" description="N6-(beta-hydroxybutyryl)lysine" evidence="9">
    <location>
        <position position="33"/>
    </location>
</feature>
<feature type="modified residue" description="N6-(beta-hydroxybutyryl)lysine" evidence="9">
    <location>
        <position position="35"/>
    </location>
</feature>
<feature type="modified residue" description="N6-(beta-hydroxybutyryl)lysine" evidence="9">
    <location>
        <position position="53"/>
    </location>
</feature>
<feature type="modified residue" description="Citrulline" evidence="8">
    <location>
        <position position="55"/>
    </location>
</feature>
<feature type="modified residue" description="N6-(beta-hydroxybutyryl)lysine" evidence="9">
    <location>
        <position position="65"/>
    </location>
</feature>
<feature type="modified residue" description="N6-(beta-hydroxybutyryl)lysine" evidence="9">
    <location>
        <position position="86"/>
    </location>
</feature>
<feature type="modified residue" description="N6-(beta-hydroxybutyryl)lysine" evidence="9">
    <location>
        <position position="91"/>
    </location>
</feature>
<feature type="modified residue" description="Phosphoserine; by PKC" evidence="2">
    <location>
        <position position="105"/>
    </location>
</feature>
<feature type="modified residue" description="N6-(beta-hydroxybutyryl)lysine" evidence="9">
    <location>
        <position position="107"/>
    </location>
</feature>
<feature type="modified residue" description="N6-(beta-hydroxybutyryl)lysine" evidence="9">
    <location>
        <position position="141"/>
    </location>
</feature>
<feature type="sequence conflict" description="In Ref. 4; BAC35711." evidence="10" ref="4">
    <original>G</original>
    <variation>C</variation>
    <location>
        <position position="57"/>
    </location>
</feature>
<comment type="function">
    <text evidence="1 7">Histone H1 protein binds to linker DNA between nucleosomes forming the macromolecular structure known as the chromatin fiber. Histones H1 are necessary for the condensation of nucleosome chains into higher-order structured fibers. Also acts as a regulator of individual gene transcription through chromatin remodeling, nucleosome spacing and DNA methylation (By similarity).</text>
</comment>
<comment type="subcellular location">
    <subcellularLocation>
        <location>Nucleus</location>
    </subcellularLocation>
    <subcellularLocation>
        <location>Chromosome</location>
    </subcellularLocation>
    <text evidence="1">Mainly localizes in euchromatin.</text>
</comment>
<comment type="domain">
    <text evidence="1">The C-terminal domain is required for high-affinity binding to chromatin.</text>
</comment>
<comment type="PTM">
    <text evidence="4">H1 histones are progressively phosphorylated during the cell cycle, becoming maximally phosphorylated during late G2 phase and M phase, and being dephosphorylated sharply thereafter.</text>
</comment>
<comment type="PTM">
    <text evidence="9">Hydroxybutyrylation of histones is induced by starvation.</text>
</comment>
<comment type="PTM">
    <text evidence="8">Citrullination at Arg-55 (H1R54ci) by PADI4 takes place within the DNA-binding site of H1 and results in its displacement from chromatin and global chromatin decondensation, thereby promoting pluripotency and stem cell maintenance.</text>
</comment>
<comment type="disruption phenotype">
    <text evidence="7">No visible phenotype. Triple-deficient mice (H1-2, H1-3 and H1-4) die by midgestation with a broad range of defects. These embryos have about 50% of the normal ratio of H1 to nucleosomes, demonstrating that critical levels of total H1 histones are essential for mouse embryogenesis.</text>
</comment>
<comment type="similarity">
    <text evidence="5">Belongs to the histone H1/H5 family.</text>
</comment>
<proteinExistence type="evidence at protein level"/>
<accession>P43277</accession>
<accession>Q8C6M4</accession>
<reference key="1">
    <citation type="journal article" date="1995" name="Mamm. Genome">
        <title>Isolation of two murine H1 histone genes and chromosomal mapping of the H1 gene complement.</title>
        <authorList>
            <person name="Drabent B."/>
            <person name="Franke K."/>
            <person name="Bode C."/>
            <person name="Kosciessa U."/>
            <person name="Bouterfa H."/>
            <person name="Hameister H."/>
            <person name="Doenecke D."/>
        </authorList>
    </citation>
    <scope>NUCLEOTIDE SEQUENCE [GENOMIC DNA]</scope>
    <source>
        <strain>BALB/cJ</strain>
        <tissue>Liver</tissue>
    </source>
</reference>
<reference key="2">
    <citation type="journal article" date="1996" name="Genome Res.">
        <title>Characterization of the mouse histone gene cluster on chromosome 13: 45 histone genes in three patches spread over 1Mb.</title>
        <authorList>
            <person name="Wang Z.-F."/>
            <person name="Krasikov T."/>
            <person name="Frey M.R."/>
            <person name="Wang J."/>
            <person name="Matera A.G."/>
            <person name="Marzluff W.F."/>
        </authorList>
    </citation>
    <scope>NUCLEOTIDE SEQUENCE [GENOMIC DNA]</scope>
    <source>
        <strain>C57BL/6J</strain>
    </source>
</reference>
<reference key="3">
    <citation type="journal article" date="2002" name="Genomics">
        <title>The human and mouse replication-dependent histone genes.</title>
        <authorList>
            <person name="Marzluff W.F."/>
            <person name="Gongidi P."/>
            <person name="Woods K.R."/>
            <person name="Jin J."/>
            <person name="Maltais L.J."/>
        </authorList>
    </citation>
    <scope>NUCLEOTIDE SEQUENCE [GENOMIC DNA]</scope>
</reference>
<reference key="4">
    <citation type="journal article" date="2005" name="Science">
        <title>The transcriptional landscape of the mammalian genome.</title>
        <authorList>
            <person name="Carninci P."/>
            <person name="Kasukawa T."/>
            <person name="Katayama S."/>
            <person name="Gough J."/>
            <person name="Frith M.C."/>
            <person name="Maeda N."/>
            <person name="Oyama R."/>
            <person name="Ravasi T."/>
            <person name="Lenhard B."/>
            <person name="Wells C."/>
            <person name="Kodzius R."/>
            <person name="Shimokawa K."/>
            <person name="Bajic V.B."/>
            <person name="Brenner S.E."/>
            <person name="Batalov S."/>
            <person name="Forrest A.R."/>
            <person name="Zavolan M."/>
            <person name="Davis M.J."/>
            <person name="Wilming L.G."/>
            <person name="Aidinis V."/>
            <person name="Allen J.E."/>
            <person name="Ambesi-Impiombato A."/>
            <person name="Apweiler R."/>
            <person name="Aturaliya R.N."/>
            <person name="Bailey T.L."/>
            <person name="Bansal M."/>
            <person name="Baxter L."/>
            <person name="Beisel K.W."/>
            <person name="Bersano T."/>
            <person name="Bono H."/>
            <person name="Chalk A.M."/>
            <person name="Chiu K.P."/>
            <person name="Choudhary V."/>
            <person name="Christoffels A."/>
            <person name="Clutterbuck D.R."/>
            <person name="Crowe M.L."/>
            <person name="Dalla E."/>
            <person name="Dalrymple B.P."/>
            <person name="de Bono B."/>
            <person name="Della Gatta G."/>
            <person name="di Bernardo D."/>
            <person name="Down T."/>
            <person name="Engstrom P."/>
            <person name="Fagiolini M."/>
            <person name="Faulkner G."/>
            <person name="Fletcher C.F."/>
            <person name="Fukushima T."/>
            <person name="Furuno M."/>
            <person name="Futaki S."/>
            <person name="Gariboldi M."/>
            <person name="Georgii-Hemming P."/>
            <person name="Gingeras T.R."/>
            <person name="Gojobori T."/>
            <person name="Green R.E."/>
            <person name="Gustincich S."/>
            <person name="Harbers M."/>
            <person name="Hayashi Y."/>
            <person name="Hensch T.K."/>
            <person name="Hirokawa N."/>
            <person name="Hill D."/>
            <person name="Huminiecki L."/>
            <person name="Iacono M."/>
            <person name="Ikeo K."/>
            <person name="Iwama A."/>
            <person name="Ishikawa T."/>
            <person name="Jakt M."/>
            <person name="Kanapin A."/>
            <person name="Katoh M."/>
            <person name="Kawasawa Y."/>
            <person name="Kelso J."/>
            <person name="Kitamura H."/>
            <person name="Kitano H."/>
            <person name="Kollias G."/>
            <person name="Krishnan S.P."/>
            <person name="Kruger A."/>
            <person name="Kummerfeld S.K."/>
            <person name="Kurochkin I.V."/>
            <person name="Lareau L.F."/>
            <person name="Lazarevic D."/>
            <person name="Lipovich L."/>
            <person name="Liu J."/>
            <person name="Liuni S."/>
            <person name="McWilliam S."/>
            <person name="Madan Babu M."/>
            <person name="Madera M."/>
            <person name="Marchionni L."/>
            <person name="Matsuda H."/>
            <person name="Matsuzawa S."/>
            <person name="Miki H."/>
            <person name="Mignone F."/>
            <person name="Miyake S."/>
            <person name="Morris K."/>
            <person name="Mottagui-Tabar S."/>
            <person name="Mulder N."/>
            <person name="Nakano N."/>
            <person name="Nakauchi H."/>
            <person name="Ng P."/>
            <person name="Nilsson R."/>
            <person name="Nishiguchi S."/>
            <person name="Nishikawa S."/>
            <person name="Nori F."/>
            <person name="Ohara O."/>
            <person name="Okazaki Y."/>
            <person name="Orlando V."/>
            <person name="Pang K.C."/>
            <person name="Pavan W.J."/>
            <person name="Pavesi G."/>
            <person name="Pesole G."/>
            <person name="Petrovsky N."/>
            <person name="Piazza S."/>
            <person name="Reed J."/>
            <person name="Reid J.F."/>
            <person name="Ring B.Z."/>
            <person name="Ringwald M."/>
            <person name="Rost B."/>
            <person name="Ruan Y."/>
            <person name="Salzberg S.L."/>
            <person name="Sandelin A."/>
            <person name="Schneider C."/>
            <person name="Schoenbach C."/>
            <person name="Sekiguchi K."/>
            <person name="Semple C.A."/>
            <person name="Seno S."/>
            <person name="Sessa L."/>
            <person name="Sheng Y."/>
            <person name="Shibata Y."/>
            <person name="Shimada H."/>
            <person name="Shimada K."/>
            <person name="Silva D."/>
            <person name="Sinclair B."/>
            <person name="Sperling S."/>
            <person name="Stupka E."/>
            <person name="Sugiura K."/>
            <person name="Sultana R."/>
            <person name="Takenaka Y."/>
            <person name="Taki K."/>
            <person name="Tammoja K."/>
            <person name="Tan S.L."/>
            <person name="Tang S."/>
            <person name="Taylor M.S."/>
            <person name="Tegner J."/>
            <person name="Teichmann S.A."/>
            <person name="Ueda H.R."/>
            <person name="van Nimwegen E."/>
            <person name="Verardo R."/>
            <person name="Wei C.L."/>
            <person name="Yagi K."/>
            <person name="Yamanishi H."/>
            <person name="Zabarovsky E."/>
            <person name="Zhu S."/>
            <person name="Zimmer A."/>
            <person name="Hide W."/>
            <person name="Bult C."/>
            <person name="Grimmond S.M."/>
            <person name="Teasdale R.D."/>
            <person name="Liu E.T."/>
            <person name="Brusic V."/>
            <person name="Quackenbush J."/>
            <person name="Wahlestedt C."/>
            <person name="Mattick J.S."/>
            <person name="Hume D.A."/>
            <person name="Kai C."/>
            <person name="Sasaki D."/>
            <person name="Tomaru Y."/>
            <person name="Fukuda S."/>
            <person name="Kanamori-Katayama M."/>
            <person name="Suzuki M."/>
            <person name="Aoki J."/>
            <person name="Arakawa T."/>
            <person name="Iida J."/>
            <person name="Imamura K."/>
            <person name="Itoh M."/>
            <person name="Kato T."/>
            <person name="Kawaji H."/>
            <person name="Kawagashira N."/>
            <person name="Kawashima T."/>
            <person name="Kojima M."/>
            <person name="Kondo S."/>
            <person name="Konno H."/>
            <person name="Nakano K."/>
            <person name="Ninomiya N."/>
            <person name="Nishio T."/>
            <person name="Okada M."/>
            <person name="Plessy C."/>
            <person name="Shibata K."/>
            <person name="Shiraki T."/>
            <person name="Suzuki S."/>
            <person name="Tagami M."/>
            <person name="Waki K."/>
            <person name="Watahiki A."/>
            <person name="Okamura-Oho Y."/>
            <person name="Suzuki H."/>
            <person name="Kawai J."/>
            <person name="Hayashizaki Y."/>
        </authorList>
    </citation>
    <scope>NUCLEOTIDE SEQUENCE [LARGE SCALE MRNA]</scope>
    <source>
        <strain>C57BL/6J</strain>
        <tissue>Ovary</tissue>
    </source>
</reference>
<reference key="5">
    <citation type="journal article" date="1996" name="Biochemistry">
        <title>In vivo phosphorylation of histone H1 variants during the cell cycle.</title>
        <authorList>
            <person name="Talasz H."/>
            <person name="Helliger W."/>
            <person name="Puschendorf B."/>
            <person name="Lindner H."/>
        </authorList>
    </citation>
    <scope>PHOSPHORYLATION</scope>
</reference>
<reference key="6">
    <citation type="journal article" date="2003" name="Mol. Cell. Biol.">
        <title>H1 linker histones are essential for mouse development and affect nucleosome spacing in vivo.</title>
        <authorList>
            <person name="Fan Y."/>
            <person name="Nikitina T."/>
            <person name="Morin-Kensicki E.M."/>
            <person name="Zhao J."/>
            <person name="Magnuson T.R."/>
            <person name="Woodcock C.L."/>
            <person name="Skoultchi A.I."/>
        </authorList>
    </citation>
    <scope>DISRUPTION PHENOTYPE</scope>
    <scope>FUNCTION</scope>
</reference>
<reference key="7">
    <citation type="journal article" date="2007" name="Proc. Natl. Acad. Sci. U.S.A.">
        <title>Large-scale phosphorylation analysis of mouse liver.</title>
        <authorList>
            <person name="Villen J."/>
            <person name="Beausoleil S.A."/>
            <person name="Gerber S.A."/>
            <person name="Gygi S.P."/>
        </authorList>
    </citation>
    <scope>ACETYLATION [LARGE SCALE ANALYSIS] AT SER-2</scope>
    <scope>PHOSPHORYLATION [LARGE SCALE ANALYSIS] AT THR-18</scope>
    <scope>CLEAVAGE OF INITIATOR METHIONINE [LARGE SCALE ANALYSIS]</scope>
    <scope>IDENTIFICATION BY MASS SPECTROMETRY [LARGE SCALE ANALYSIS]</scope>
    <source>
        <tissue>Liver</tissue>
    </source>
</reference>
<reference key="8">
    <citation type="journal article" date="2013" name="Mol. Cell">
        <title>SIRT5-mediated lysine desuccinylation impacts diverse metabolic pathways.</title>
        <authorList>
            <person name="Park J."/>
            <person name="Chen Y."/>
            <person name="Tishkoff D.X."/>
            <person name="Peng C."/>
            <person name="Tan M."/>
            <person name="Dai L."/>
            <person name="Xie Z."/>
            <person name="Zhang Y."/>
            <person name="Zwaans B.M."/>
            <person name="Skinner M.E."/>
            <person name="Lombard D.B."/>
            <person name="Zhao Y."/>
        </authorList>
    </citation>
    <scope>ACETYLATION [LARGE SCALE ANALYSIS] AT SER-2 AND LYS-17</scope>
    <scope>CLEAVAGE OF INITIATOR METHIONINE [LARGE SCALE ANALYSIS]</scope>
    <scope>IDENTIFICATION BY MASS SPECTROMETRY [LARGE SCALE ANALYSIS]</scope>
    <source>
        <tissue>Embryonic fibroblast</tissue>
    </source>
</reference>
<reference key="9">
    <citation type="journal article" date="2014" name="Nature">
        <title>Citrullination regulates pluripotency and histone H1 binding to chromatin.</title>
        <authorList>
            <person name="Christophorou M.A."/>
            <person name="Castelo-Branco G."/>
            <person name="Halley-Stott R.P."/>
            <person name="Oliveira C.S."/>
            <person name="Loos R."/>
            <person name="Radzisheuskaya A."/>
            <person name="Mowen K.A."/>
            <person name="Bertone P."/>
            <person name="Silva J.C."/>
            <person name="Zernicka-Goetz M."/>
            <person name="Nielsen M.L."/>
            <person name="Gurdon J.B."/>
            <person name="Kouzarides T."/>
        </authorList>
    </citation>
    <scope>CITRULLINATION AT ARG-55</scope>
</reference>
<reference key="10">
    <citation type="journal article" date="2016" name="Mol. Cell">
        <title>Metabolic regulation of gene expression by histone lysine beta-hydroxybutyrylation.</title>
        <authorList>
            <person name="Xie Z."/>
            <person name="Zhang D."/>
            <person name="Chung D."/>
            <person name="Tang Z."/>
            <person name="Huang H."/>
            <person name="Dai L."/>
            <person name="Qi S."/>
            <person name="Li J."/>
            <person name="Colak G."/>
            <person name="Chen Y."/>
            <person name="Xia C."/>
            <person name="Peng C."/>
            <person name="Ruan H."/>
            <person name="Kirkey M."/>
            <person name="Wang D."/>
            <person name="Jensen L.M."/>
            <person name="Kwon O.K."/>
            <person name="Lee S."/>
            <person name="Pletcher S.D."/>
            <person name="Tan M."/>
            <person name="Lombard D.B."/>
            <person name="White K.P."/>
            <person name="Zhao H."/>
            <person name="Li J."/>
            <person name="Roeder R.G."/>
            <person name="Yang X."/>
            <person name="Zhao Y."/>
        </authorList>
    </citation>
    <scope>HYDROXYBUTYRYLATION AT LYS-33; LYS-35; LYS-53; LYS-65; LYS-86; LYS-91; LYS-107 AND LYS-141</scope>
</reference>
<sequence>MSETAPAAPAAPAPVEKTPVKKKAKKTGAAAGKRKASGPPVSELITKAVAASKERSGVSLAALKKALAAAGYDVEKNNSRIKLGLKSLVSKGTLVQTKGTGASGSFKLNKKAASGEAKPKAKKAGAAKAKKPAGAAKKPKKATGAATPKKTAKKTPKKAKKPAAAAGAKKVSKSPKKVKAAKPKKAAKSPAKAKAPKAKASKPKASKPKATKAKKAAPRKK</sequence>
<organism>
    <name type="scientific">Mus musculus</name>
    <name type="common">Mouse</name>
    <dbReference type="NCBI Taxonomy" id="10090"/>
    <lineage>
        <taxon>Eukaryota</taxon>
        <taxon>Metazoa</taxon>
        <taxon>Chordata</taxon>
        <taxon>Craniata</taxon>
        <taxon>Vertebrata</taxon>
        <taxon>Euteleostomi</taxon>
        <taxon>Mammalia</taxon>
        <taxon>Eutheria</taxon>
        <taxon>Euarchontoglires</taxon>
        <taxon>Glires</taxon>
        <taxon>Rodentia</taxon>
        <taxon>Myomorpha</taxon>
        <taxon>Muroidea</taxon>
        <taxon>Muridae</taxon>
        <taxon>Murinae</taxon>
        <taxon>Mus</taxon>
        <taxon>Mus</taxon>
    </lineage>
</organism>
<name>H13_MOUSE</name>
<gene>
    <name evidence="3" type="primary">H1-3</name>
    <name evidence="11" type="synonym">H1f3</name>
    <name evidence="11" type="synonym">Hist1h1d</name>
</gene>
<evidence type="ECO:0000250" key="1"/>
<evidence type="ECO:0000250" key="2">
    <source>
        <dbReference type="UniProtKB" id="A7MAZ5"/>
    </source>
</evidence>
<evidence type="ECO:0000250" key="3">
    <source>
        <dbReference type="UniProtKB" id="P16402"/>
    </source>
</evidence>
<evidence type="ECO:0000250" key="4">
    <source>
        <dbReference type="UniProtKB" id="P43275"/>
    </source>
</evidence>
<evidence type="ECO:0000255" key="5">
    <source>
        <dbReference type="PROSITE-ProRule" id="PRU00837"/>
    </source>
</evidence>
<evidence type="ECO:0000256" key="6">
    <source>
        <dbReference type="SAM" id="MobiDB-lite"/>
    </source>
</evidence>
<evidence type="ECO:0000269" key="7">
    <source>
    </source>
</evidence>
<evidence type="ECO:0000269" key="8">
    <source>
    </source>
</evidence>
<evidence type="ECO:0000269" key="9">
    <source>
    </source>
</evidence>
<evidence type="ECO:0000305" key="10"/>
<evidence type="ECO:0000312" key="11">
    <source>
        <dbReference type="MGI" id="MGI:107502"/>
    </source>
</evidence>
<evidence type="ECO:0007744" key="12">
    <source>
    </source>
</evidence>
<evidence type="ECO:0007744" key="13">
    <source>
    </source>
</evidence>
<protein>
    <recommendedName>
        <fullName>Histone H1.3</fullName>
    </recommendedName>
    <alternativeName>
        <fullName>H1 VAR.4</fullName>
    </alternativeName>
    <alternativeName>
        <fullName>H1d</fullName>
    </alternativeName>
</protein>
<keyword id="KW-0007">Acetylation</keyword>
<keyword id="KW-0158">Chromosome</keyword>
<keyword id="KW-0164">Citrullination</keyword>
<keyword id="KW-0238">DNA-binding</keyword>
<keyword id="KW-0379">Hydroxylation</keyword>
<keyword id="KW-0539">Nucleus</keyword>
<keyword id="KW-0597">Phosphoprotein</keyword>
<keyword id="KW-1185">Reference proteome</keyword>